<keyword id="KW-0012">Acyltransferase</keyword>
<keyword id="KW-0963">Cytoplasm</keyword>
<keyword id="KW-0408">Iron</keyword>
<keyword id="KW-0479">Metal-binding</keyword>
<keyword id="KW-1185">Reference proteome</keyword>
<keyword id="KW-0808">Transferase</keyword>
<keyword id="KW-0819">tRNA processing</keyword>
<dbReference type="EC" id="2.3.1.234" evidence="1"/>
<dbReference type="EMBL" id="D88802">
    <property type="protein sequence ID" value="BAA19718.1"/>
    <property type="molecule type" value="Genomic_DNA"/>
</dbReference>
<dbReference type="EMBL" id="AL009126">
    <property type="protein sequence ID" value="CAB12413.1"/>
    <property type="molecule type" value="Genomic_DNA"/>
</dbReference>
<dbReference type="PIR" id="F69786">
    <property type="entry name" value="F69786"/>
</dbReference>
<dbReference type="RefSeq" id="NP_388475.1">
    <property type="nucleotide sequence ID" value="NC_000964.3"/>
</dbReference>
<dbReference type="RefSeq" id="WP_003244138.1">
    <property type="nucleotide sequence ID" value="NZ_OZ025638.1"/>
</dbReference>
<dbReference type="SMR" id="O05518"/>
<dbReference type="FunCoup" id="O05518">
    <property type="interactions" value="877"/>
</dbReference>
<dbReference type="STRING" id="224308.BSU05940"/>
<dbReference type="jPOST" id="O05518"/>
<dbReference type="PaxDb" id="224308-BSU05940"/>
<dbReference type="EnsemblBacteria" id="CAB12413">
    <property type="protein sequence ID" value="CAB12413"/>
    <property type="gene ID" value="BSU_05940"/>
</dbReference>
<dbReference type="GeneID" id="938020"/>
<dbReference type="KEGG" id="bsu:BSU05940"/>
<dbReference type="PATRIC" id="fig|224308.179.peg.639"/>
<dbReference type="eggNOG" id="COG0533">
    <property type="taxonomic scope" value="Bacteria"/>
</dbReference>
<dbReference type="InParanoid" id="O05518"/>
<dbReference type="OrthoDB" id="9806197at2"/>
<dbReference type="PhylomeDB" id="O05518"/>
<dbReference type="BioCyc" id="BSUB:BSU05940-MONOMER"/>
<dbReference type="BRENDA" id="2.3.1.234">
    <property type="organism ID" value="658"/>
</dbReference>
<dbReference type="Proteomes" id="UP000001570">
    <property type="component" value="Chromosome"/>
</dbReference>
<dbReference type="GO" id="GO:0005737">
    <property type="term" value="C:cytoplasm"/>
    <property type="evidence" value="ECO:0007669"/>
    <property type="project" value="UniProtKB-SubCell"/>
</dbReference>
<dbReference type="GO" id="GO:0005506">
    <property type="term" value="F:iron ion binding"/>
    <property type="evidence" value="ECO:0007669"/>
    <property type="project" value="UniProtKB-UniRule"/>
</dbReference>
<dbReference type="GO" id="GO:0061711">
    <property type="term" value="F:N(6)-L-threonylcarbamoyladenine synthase activity"/>
    <property type="evidence" value="ECO:0007669"/>
    <property type="project" value="UniProtKB-EC"/>
</dbReference>
<dbReference type="GO" id="GO:0002949">
    <property type="term" value="P:tRNA threonylcarbamoyladenosine modification"/>
    <property type="evidence" value="ECO:0000314"/>
    <property type="project" value="UniProtKB"/>
</dbReference>
<dbReference type="CDD" id="cd24133">
    <property type="entry name" value="ASKHA_NBD_TsaD_bac"/>
    <property type="match status" value="1"/>
</dbReference>
<dbReference type="FunFam" id="3.30.420.40:FF:000012">
    <property type="entry name" value="tRNA N6-adenosine threonylcarbamoyltransferase"/>
    <property type="match status" value="1"/>
</dbReference>
<dbReference type="FunFam" id="3.30.420.40:FF:000040">
    <property type="entry name" value="tRNA N6-adenosine threonylcarbamoyltransferase"/>
    <property type="match status" value="1"/>
</dbReference>
<dbReference type="Gene3D" id="3.30.420.40">
    <property type="match status" value="2"/>
</dbReference>
<dbReference type="HAMAP" id="MF_01445">
    <property type="entry name" value="TsaD"/>
    <property type="match status" value="1"/>
</dbReference>
<dbReference type="InterPro" id="IPR043129">
    <property type="entry name" value="ATPase_NBD"/>
</dbReference>
<dbReference type="InterPro" id="IPR000905">
    <property type="entry name" value="Gcp-like_dom"/>
</dbReference>
<dbReference type="InterPro" id="IPR017861">
    <property type="entry name" value="KAE1/TsaD"/>
</dbReference>
<dbReference type="InterPro" id="IPR017860">
    <property type="entry name" value="Peptidase_M22_CS"/>
</dbReference>
<dbReference type="InterPro" id="IPR022450">
    <property type="entry name" value="TsaD"/>
</dbReference>
<dbReference type="NCBIfam" id="TIGR00329">
    <property type="entry name" value="gcp_kae1"/>
    <property type="match status" value="1"/>
</dbReference>
<dbReference type="NCBIfam" id="TIGR03723">
    <property type="entry name" value="T6A_TsaD_YgjD"/>
    <property type="match status" value="1"/>
</dbReference>
<dbReference type="PANTHER" id="PTHR11735">
    <property type="entry name" value="TRNA N6-ADENOSINE THREONYLCARBAMOYLTRANSFERASE"/>
    <property type="match status" value="1"/>
</dbReference>
<dbReference type="PANTHER" id="PTHR11735:SF6">
    <property type="entry name" value="TRNA N6-ADENOSINE THREONYLCARBAMOYLTRANSFERASE, MITOCHONDRIAL"/>
    <property type="match status" value="1"/>
</dbReference>
<dbReference type="Pfam" id="PF00814">
    <property type="entry name" value="TsaD"/>
    <property type="match status" value="1"/>
</dbReference>
<dbReference type="PRINTS" id="PR00789">
    <property type="entry name" value="OSIALOPTASE"/>
</dbReference>
<dbReference type="SUPFAM" id="SSF53067">
    <property type="entry name" value="Actin-like ATPase domain"/>
    <property type="match status" value="2"/>
</dbReference>
<dbReference type="PROSITE" id="PS01016">
    <property type="entry name" value="GLYCOPROTEASE"/>
    <property type="match status" value="1"/>
</dbReference>
<evidence type="ECO:0000255" key="1">
    <source>
        <dbReference type="HAMAP-Rule" id="MF_01445"/>
    </source>
</evidence>
<evidence type="ECO:0000269" key="2">
    <source>
    </source>
</evidence>
<evidence type="ECO:0000269" key="3">
    <source>
    </source>
</evidence>
<evidence type="ECO:0000305" key="4"/>
<evidence type="ECO:0000305" key="5">
    <source>
    </source>
</evidence>
<name>TSAD_BACSU</name>
<accession>O05518</accession>
<organism>
    <name type="scientific">Bacillus subtilis (strain 168)</name>
    <dbReference type="NCBI Taxonomy" id="224308"/>
    <lineage>
        <taxon>Bacteria</taxon>
        <taxon>Bacillati</taxon>
        <taxon>Bacillota</taxon>
        <taxon>Bacilli</taxon>
        <taxon>Bacillales</taxon>
        <taxon>Bacillaceae</taxon>
        <taxon>Bacillus</taxon>
    </lineage>
</organism>
<proteinExistence type="evidence at protein level"/>
<sequence length="346" mass="36842">MSEQKDMYVLGIETSCDETAAAIVKNGKEIISNVVASQIESHKRFGGVVPEIASRHHVEQITLVIEEAFRKAGMTYSDIDAIAVTEGPGLVGALLIGVNAAKALSFAYNIPLVGVHHIAGHIYANRLVEDIVFPALALVVSGGHTELVYMKEHGSFEVIGETLDDAAGEAYDKVARTMGLPYPGGPQIDKLAEKGNDNIPLPRAWLEEGSYNFSFSGLKSAVINTLHNASQKGQEIAPEDLSASFQNSVIDVLVTKTARAAKEYDVKQVLLAGGVAANRGLRAALEKEFAQHEGITLVIPPLALCTDNAAMIAAAGTIAFEKGIRGAYDMNGQPGLELTSYQSLTR</sequence>
<reference key="1">
    <citation type="journal article" date="1997" name="Microbiology">
        <title>Nucleotide sequence and analysis of the phoB-rrnE-groESL region of the Bacillus subtilis chromosome.</title>
        <authorList>
            <person name="Sadaie Y."/>
            <person name="Yata K."/>
            <person name="Fujita M."/>
            <person name="Sagai H."/>
            <person name="Itaya M."/>
            <person name="Kasahara Y."/>
            <person name="Ogasawara N."/>
        </authorList>
    </citation>
    <scope>NUCLEOTIDE SEQUENCE [GENOMIC DNA]</scope>
    <source>
        <strain>168 / JH642</strain>
    </source>
</reference>
<reference key="2">
    <citation type="journal article" date="1997" name="Nature">
        <title>The complete genome sequence of the Gram-positive bacterium Bacillus subtilis.</title>
        <authorList>
            <person name="Kunst F."/>
            <person name="Ogasawara N."/>
            <person name="Moszer I."/>
            <person name="Albertini A.M."/>
            <person name="Alloni G."/>
            <person name="Azevedo V."/>
            <person name="Bertero M.G."/>
            <person name="Bessieres P."/>
            <person name="Bolotin A."/>
            <person name="Borchert S."/>
            <person name="Borriss R."/>
            <person name="Boursier L."/>
            <person name="Brans A."/>
            <person name="Braun M."/>
            <person name="Brignell S.C."/>
            <person name="Bron S."/>
            <person name="Brouillet S."/>
            <person name="Bruschi C.V."/>
            <person name="Caldwell B."/>
            <person name="Capuano V."/>
            <person name="Carter N.M."/>
            <person name="Choi S.-K."/>
            <person name="Codani J.-J."/>
            <person name="Connerton I.F."/>
            <person name="Cummings N.J."/>
            <person name="Daniel R.A."/>
            <person name="Denizot F."/>
            <person name="Devine K.M."/>
            <person name="Duesterhoeft A."/>
            <person name="Ehrlich S.D."/>
            <person name="Emmerson P.T."/>
            <person name="Entian K.-D."/>
            <person name="Errington J."/>
            <person name="Fabret C."/>
            <person name="Ferrari E."/>
            <person name="Foulger D."/>
            <person name="Fritz C."/>
            <person name="Fujita M."/>
            <person name="Fujita Y."/>
            <person name="Fuma S."/>
            <person name="Galizzi A."/>
            <person name="Galleron N."/>
            <person name="Ghim S.-Y."/>
            <person name="Glaser P."/>
            <person name="Goffeau A."/>
            <person name="Golightly E.J."/>
            <person name="Grandi G."/>
            <person name="Guiseppi G."/>
            <person name="Guy B.J."/>
            <person name="Haga K."/>
            <person name="Haiech J."/>
            <person name="Harwood C.R."/>
            <person name="Henaut A."/>
            <person name="Hilbert H."/>
            <person name="Holsappel S."/>
            <person name="Hosono S."/>
            <person name="Hullo M.-F."/>
            <person name="Itaya M."/>
            <person name="Jones L.-M."/>
            <person name="Joris B."/>
            <person name="Karamata D."/>
            <person name="Kasahara Y."/>
            <person name="Klaerr-Blanchard M."/>
            <person name="Klein C."/>
            <person name="Kobayashi Y."/>
            <person name="Koetter P."/>
            <person name="Koningstein G."/>
            <person name="Krogh S."/>
            <person name="Kumano M."/>
            <person name="Kurita K."/>
            <person name="Lapidus A."/>
            <person name="Lardinois S."/>
            <person name="Lauber J."/>
            <person name="Lazarevic V."/>
            <person name="Lee S.-M."/>
            <person name="Levine A."/>
            <person name="Liu H."/>
            <person name="Masuda S."/>
            <person name="Mauel C."/>
            <person name="Medigue C."/>
            <person name="Medina N."/>
            <person name="Mellado R.P."/>
            <person name="Mizuno M."/>
            <person name="Moestl D."/>
            <person name="Nakai S."/>
            <person name="Noback M."/>
            <person name="Noone D."/>
            <person name="O'Reilly M."/>
            <person name="Ogawa K."/>
            <person name="Ogiwara A."/>
            <person name="Oudega B."/>
            <person name="Park S.-H."/>
            <person name="Parro V."/>
            <person name="Pohl T.M."/>
            <person name="Portetelle D."/>
            <person name="Porwollik S."/>
            <person name="Prescott A.M."/>
            <person name="Presecan E."/>
            <person name="Pujic P."/>
            <person name="Purnelle B."/>
            <person name="Rapoport G."/>
            <person name="Rey M."/>
            <person name="Reynolds S."/>
            <person name="Rieger M."/>
            <person name="Rivolta C."/>
            <person name="Rocha E."/>
            <person name="Roche B."/>
            <person name="Rose M."/>
            <person name="Sadaie Y."/>
            <person name="Sato T."/>
            <person name="Scanlan E."/>
            <person name="Schleich S."/>
            <person name="Schroeter R."/>
            <person name="Scoffone F."/>
            <person name="Sekiguchi J."/>
            <person name="Sekowska A."/>
            <person name="Seror S.J."/>
            <person name="Serror P."/>
            <person name="Shin B.-S."/>
            <person name="Soldo B."/>
            <person name="Sorokin A."/>
            <person name="Tacconi E."/>
            <person name="Takagi T."/>
            <person name="Takahashi H."/>
            <person name="Takemaru K."/>
            <person name="Takeuchi M."/>
            <person name="Tamakoshi A."/>
            <person name="Tanaka T."/>
            <person name="Terpstra P."/>
            <person name="Tognoni A."/>
            <person name="Tosato V."/>
            <person name="Uchiyama S."/>
            <person name="Vandenbol M."/>
            <person name="Vannier F."/>
            <person name="Vassarotti A."/>
            <person name="Viari A."/>
            <person name="Wambutt R."/>
            <person name="Wedler E."/>
            <person name="Wedler H."/>
            <person name="Weitzenegger T."/>
            <person name="Winters P."/>
            <person name="Wipat A."/>
            <person name="Yamamoto H."/>
            <person name="Yamane K."/>
            <person name="Yasumoto K."/>
            <person name="Yata K."/>
            <person name="Yoshida K."/>
            <person name="Yoshikawa H.-F."/>
            <person name="Zumstein E."/>
            <person name="Yoshikawa H."/>
            <person name="Danchin A."/>
        </authorList>
    </citation>
    <scope>NUCLEOTIDE SEQUENCE [LARGE SCALE GENOMIC DNA]</scope>
    <source>
        <strain>168</strain>
    </source>
</reference>
<reference key="3">
    <citation type="journal article" date="2011" name="EMBO J.">
        <title>A role for the universal Kae1/Qri7/YgjD (COG0533) family in tRNA modification.</title>
        <authorList>
            <person name="El Yacoubi B."/>
            <person name="Hatin I."/>
            <person name="Deutsch C."/>
            <person name="Kahveci T."/>
            <person name="Rousset J.P."/>
            <person name="Iwata-Reuyl D."/>
            <person name="Murzin A.G."/>
            <person name="de Crecy-Lagard V."/>
        </authorList>
    </citation>
    <scope>FUNCTION</scope>
    <scope>SUBUNIT</scope>
    <scope>TSAB REQUIREMENT</scope>
    <source>
        <strain>168</strain>
    </source>
</reference>
<reference key="4">
    <citation type="journal article" date="2012" name="Biochemistry">
        <title>Mechanism of N6-threonylcarbamoyladenosine (t(6)A) biosynthesis: isolation and characterization of the intermediate threonylcarbamoyl-AMP.</title>
        <authorList>
            <person name="Lauhon C.T."/>
        </authorList>
    </citation>
    <scope>FUNCTION</scope>
    <source>
        <strain>168</strain>
    </source>
</reference>
<protein>
    <recommendedName>
        <fullName evidence="1">tRNA N6-adenosine threonylcarbamoyltransferase</fullName>
        <ecNumber evidence="1">2.3.1.234</ecNumber>
    </recommendedName>
    <alternativeName>
        <fullName evidence="1">N6-L-threonylcarbamoyladenine synthase</fullName>
        <shortName evidence="1">t(6)A synthase</shortName>
    </alternativeName>
    <alternativeName>
        <fullName evidence="1">t(6)A37 threonylcarbamoyladenosine biosynthesis protein TsaD</fullName>
    </alternativeName>
    <alternativeName>
        <fullName evidence="1">tRNA threonylcarbamoyladenosine biosynthesis protein TsaD</fullName>
    </alternativeName>
</protein>
<comment type="function">
    <text evidence="2 3">Required for the formation of a threonylcarbamoyl group on adenosine at position 37 (t(6)A37) in tRNAs that read codons beginning with adenine. Is involved in the transfer of the threonylcarbamoyl moiety of threonylcarbamoyl-AMP (TC-AMP) to the N6 group of A37, together with TsaE and TsaB; this reaction does not require ATP in vitro. TsaD likely plays a direct catalytic role in this reaction.</text>
</comment>
<comment type="catalytic activity">
    <reaction evidence="1">
        <text>L-threonylcarbamoyladenylate + adenosine(37) in tRNA = N(6)-L-threonylcarbamoyladenosine(37) in tRNA + AMP + H(+)</text>
        <dbReference type="Rhea" id="RHEA:37059"/>
        <dbReference type="Rhea" id="RHEA-COMP:10162"/>
        <dbReference type="Rhea" id="RHEA-COMP:10163"/>
        <dbReference type="ChEBI" id="CHEBI:15378"/>
        <dbReference type="ChEBI" id="CHEBI:73682"/>
        <dbReference type="ChEBI" id="CHEBI:74411"/>
        <dbReference type="ChEBI" id="CHEBI:74418"/>
        <dbReference type="ChEBI" id="CHEBI:456215"/>
        <dbReference type="EC" id="2.3.1.234"/>
    </reaction>
</comment>
<comment type="cofactor">
    <cofactor evidence="1">
        <name>Fe(2+)</name>
        <dbReference type="ChEBI" id="CHEBI:29033"/>
    </cofactor>
    <text evidence="1">Binds 1 Fe(2+) ion per subunit.</text>
</comment>
<comment type="subunit">
    <text evidence="2">May form a heterodimer with TsaB.</text>
</comment>
<comment type="subcellular location">
    <subcellularLocation>
        <location evidence="1">Cytoplasm</location>
    </subcellularLocation>
</comment>
<comment type="miscellaneous">
    <text evidence="5">The four proteins YwlC, TsaD, TsaB and TsaE are necessary and sufficient for tRNA(NNU) t(6)A37 threonylcarbamoyladenosine biosynthesis in vitro in B.subtilis.</text>
</comment>
<comment type="similarity">
    <text evidence="1">Belongs to the KAE1 / TsaD family.</text>
</comment>
<comment type="caution">
    <text evidence="4">The well-known t(6)A modification appears to be a hydrolyzed artifact of natural cyclic t(6)A (ct(6)A) that occurs during the preparation and handling of tRNA in B.subtilis and many other species (PubMed:23242255). In these species, the t(6)A modification is processed further by dehydration into ct(6)A, a reaction catalyzed by TcdA.</text>
</comment>
<feature type="chain" id="PRO_0000096957" description="tRNA N6-adenosine threonylcarbamoyltransferase">
    <location>
        <begin position="1"/>
        <end position="346"/>
    </location>
</feature>
<feature type="binding site" evidence="1">
    <location>
        <position position="117"/>
    </location>
    <ligand>
        <name>Fe cation</name>
        <dbReference type="ChEBI" id="CHEBI:24875"/>
    </ligand>
</feature>
<feature type="binding site" evidence="1">
    <location>
        <position position="121"/>
    </location>
    <ligand>
        <name>Fe cation</name>
        <dbReference type="ChEBI" id="CHEBI:24875"/>
    </ligand>
</feature>
<feature type="binding site" evidence="1">
    <location>
        <begin position="139"/>
        <end position="143"/>
    </location>
    <ligand>
        <name>substrate</name>
    </ligand>
</feature>
<feature type="binding site" evidence="1">
    <location>
        <position position="172"/>
    </location>
    <ligand>
        <name>substrate</name>
    </ligand>
</feature>
<feature type="binding site" evidence="1">
    <location>
        <position position="185"/>
    </location>
    <ligand>
        <name>substrate</name>
    </ligand>
</feature>
<feature type="binding site" evidence="1">
    <location>
        <position position="189"/>
    </location>
    <ligand>
        <name>substrate</name>
    </ligand>
</feature>
<feature type="binding site" evidence="1">
    <location>
        <position position="278"/>
    </location>
    <ligand>
        <name>substrate</name>
    </ligand>
</feature>
<feature type="binding site" evidence="1">
    <location>
        <position position="307"/>
    </location>
    <ligand>
        <name>Fe cation</name>
        <dbReference type="ChEBI" id="CHEBI:24875"/>
    </ligand>
</feature>
<gene>
    <name evidence="1" type="primary">tsaD</name>
    <name type="synonym">gcp</name>
    <name type="synonym">ydiE</name>
    <name type="ordered locus">BSU05940</name>
</gene>